<organism>
    <name type="scientific">Salmonella arizonae (strain ATCC BAA-731 / CDC346-86 / RSK2980)</name>
    <dbReference type="NCBI Taxonomy" id="41514"/>
    <lineage>
        <taxon>Bacteria</taxon>
        <taxon>Pseudomonadati</taxon>
        <taxon>Pseudomonadota</taxon>
        <taxon>Gammaproteobacteria</taxon>
        <taxon>Enterobacterales</taxon>
        <taxon>Enterobacteriaceae</taxon>
        <taxon>Salmonella</taxon>
    </lineage>
</organism>
<accession>A9MF17</accession>
<dbReference type="EC" id="1.8.1.2" evidence="1"/>
<dbReference type="EMBL" id="CP000880">
    <property type="protein sequence ID" value="ABX19969.1"/>
    <property type="molecule type" value="Genomic_DNA"/>
</dbReference>
<dbReference type="SMR" id="A9MF17"/>
<dbReference type="STRING" id="41514.SARI_00015"/>
<dbReference type="KEGG" id="ses:SARI_00015"/>
<dbReference type="HOGENOM" id="CLU_001975_3_2_6"/>
<dbReference type="UniPathway" id="UPA00140">
    <property type="reaction ID" value="UER00207"/>
</dbReference>
<dbReference type="Proteomes" id="UP000002084">
    <property type="component" value="Chromosome"/>
</dbReference>
<dbReference type="GO" id="GO:0009337">
    <property type="term" value="C:sulfite reductase complex (NADPH)"/>
    <property type="evidence" value="ECO:0007669"/>
    <property type="project" value="InterPro"/>
</dbReference>
<dbReference type="GO" id="GO:0051539">
    <property type="term" value="F:4 iron, 4 sulfur cluster binding"/>
    <property type="evidence" value="ECO:0007669"/>
    <property type="project" value="UniProtKB-KW"/>
</dbReference>
<dbReference type="GO" id="GO:0020037">
    <property type="term" value="F:heme binding"/>
    <property type="evidence" value="ECO:0007669"/>
    <property type="project" value="InterPro"/>
</dbReference>
<dbReference type="GO" id="GO:0046872">
    <property type="term" value="F:metal ion binding"/>
    <property type="evidence" value="ECO:0007669"/>
    <property type="project" value="UniProtKB-KW"/>
</dbReference>
<dbReference type="GO" id="GO:0050661">
    <property type="term" value="F:NADP binding"/>
    <property type="evidence" value="ECO:0007669"/>
    <property type="project" value="InterPro"/>
</dbReference>
<dbReference type="GO" id="GO:0050311">
    <property type="term" value="F:sulfite reductase (ferredoxin) activity"/>
    <property type="evidence" value="ECO:0007669"/>
    <property type="project" value="TreeGrafter"/>
</dbReference>
<dbReference type="GO" id="GO:0004783">
    <property type="term" value="F:sulfite reductase (NADPH) activity"/>
    <property type="evidence" value="ECO:0007669"/>
    <property type="project" value="UniProtKB-UniRule"/>
</dbReference>
<dbReference type="GO" id="GO:0019344">
    <property type="term" value="P:cysteine biosynthetic process"/>
    <property type="evidence" value="ECO:0007669"/>
    <property type="project" value="UniProtKB-KW"/>
</dbReference>
<dbReference type="GO" id="GO:0070814">
    <property type="term" value="P:hydrogen sulfide biosynthetic process"/>
    <property type="evidence" value="ECO:0007669"/>
    <property type="project" value="UniProtKB-UniRule"/>
</dbReference>
<dbReference type="GO" id="GO:0000103">
    <property type="term" value="P:sulfate assimilation"/>
    <property type="evidence" value="ECO:0007669"/>
    <property type="project" value="UniProtKB-UniRule"/>
</dbReference>
<dbReference type="FunFam" id="3.30.413.10:FF:000003">
    <property type="entry name" value="Sulfite reductase [NADPH] hemoprotein beta-component"/>
    <property type="match status" value="1"/>
</dbReference>
<dbReference type="FunFam" id="3.30.413.10:FF:000004">
    <property type="entry name" value="Sulfite reductase [NADPH] hemoprotein beta-component"/>
    <property type="match status" value="1"/>
</dbReference>
<dbReference type="Gene3D" id="3.30.413.10">
    <property type="entry name" value="Sulfite Reductase Hemoprotein, domain 1"/>
    <property type="match status" value="2"/>
</dbReference>
<dbReference type="HAMAP" id="MF_01540">
    <property type="entry name" value="CysI"/>
    <property type="match status" value="1"/>
</dbReference>
<dbReference type="InterPro" id="IPR011786">
    <property type="entry name" value="CysI"/>
</dbReference>
<dbReference type="InterPro" id="IPR005117">
    <property type="entry name" value="NiRdtase/SiRdtase_haem-b_fer"/>
</dbReference>
<dbReference type="InterPro" id="IPR036136">
    <property type="entry name" value="Nit/Sulf_reduc_fer-like_dom_sf"/>
</dbReference>
<dbReference type="InterPro" id="IPR006067">
    <property type="entry name" value="NO2/SO3_Rdtase_4Fe4S_dom"/>
</dbReference>
<dbReference type="InterPro" id="IPR045169">
    <property type="entry name" value="NO2/SO3_Rdtase_4Fe4S_prot"/>
</dbReference>
<dbReference type="InterPro" id="IPR045854">
    <property type="entry name" value="NO2/SO3_Rdtase_4Fe4S_sf"/>
</dbReference>
<dbReference type="InterPro" id="IPR006066">
    <property type="entry name" value="NO2/SO3_Rdtase_FeS/sirohaem_BS"/>
</dbReference>
<dbReference type="NCBIfam" id="TIGR02041">
    <property type="entry name" value="CysI"/>
    <property type="match status" value="1"/>
</dbReference>
<dbReference type="NCBIfam" id="NF010029">
    <property type="entry name" value="PRK13504.1"/>
    <property type="match status" value="1"/>
</dbReference>
<dbReference type="PANTHER" id="PTHR11493:SF47">
    <property type="entry name" value="SULFITE REDUCTASE [NADPH] SUBUNIT BETA"/>
    <property type="match status" value="1"/>
</dbReference>
<dbReference type="PANTHER" id="PTHR11493">
    <property type="entry name" value="SULFITE REDUCTASE [NADPH] SUBUNIT BETA-RELATED"/>
    <property type="match status" value="1"/>
</dbReference>
<dbReference type="Pfam" id="PF01077">
    <property type="entry name" value="NIR_SIR"/>
    <property type="match status" value="1"/>
</dbReference>
<dbReference type="Pfam" id="PF03460">
    <property type="entry name" value="NIR_SIR_ferr"/>
    <property type="match status" value="2"/>
</dbReference>
<dbReference type="PRINTS" id="PR00397">
    <property type="entry name" value="SIROHAEM"/>
</dbReference>
<dbReference type="SUPFAM" id="SSF56014">
    <property type="entry name" value="Nitrite and sulphite reductase 4Fe-4S domain-like"/>
    <property type="match status" value="2"/>
</dbReference>
<dbReference type="SUPFAM" id="SSF55124">
    <property type="entry name" value="Nitrite/Sulfite reductase N-terminal domain-like"/>
    <property type="match status" value="2"/>
</dbReference>
<dbReference type="PROSITE" id="PS00365">
    <property type="entry name" value="NIR_SIR"/>
    <property type="match status" value="1"/>
</dbReference>
<protein>
    <recommendedName>
        <fullName evidence="1">Sulfite reductase [NADPH] hemoprotein beta-component</fullName>
        <shortName evidence="1">SiR-HP</shortName>
        <shortName evidence="1">SiRHP</shortName>
        <ecNumber evidence="1">1.8.1.2</ecNumber>
    </recommendedName>
</protein>
<sequence length="570" mass="63955">MSEKHPGPLVVEGKLSDAERMKRESNYLRGTIAEDLNDGLTGGFKGDNFLLIRFHGMYQQDDRDIRAERAEQKLEPRHAMLLRCRLPGGVITTKQWQVIDKFAADNTIYGSIRLTNRQTFQFHGILKKNVKPVHQMLHSVGLDALATANDMNRNVLCTSNPYESQLHSEAYEWAKKISEHLLPRTRAYAEIWLDQEKVATTDEEPILGQTYLPRKFKTTVVIPPQNDIDLHANDMSFVAIAENGKLVGFNLLVGGGLSIEHGNKKTYARTASEFGFLPLEHTLAVAEAVVTTQRDWGNRTDRKNAKTKYTLERVGLETFKAEVERRAGITFEPIRPYEFTGRGDRIGWVKGIDDNWHLTLFIENGRILDYPGRPLKSGLLEIAKIHQGEFRITANQNLIVASVPESQKMKVEKLALDYGLMNAVSPQRENSMACVSFPTCPLAMAEAERFLPSFVDKVEAVMAKHGVGNEHIVLRVTGCPNGCGRAMLAEIGLVGKAPGRYNLHLGGNRIGSRIPRMYKENITEPAILASLDELIGRWAKEREAGEGFGDFTVRAGIIRPVLDPARDFWE</sequence>
<keyword id="KW-0004">4Fe-4S</keyword>
<keyword id="KW-0028">Amino-acid biosynthesis</keyword>
<keyword id="KW-0198">Cysteine biosynthesis</keyword>
<keyword id="KW-0349">Heme</keyword>
<keyword id="KW-0408">Iron</keyword>
<keyword id="KW-0411">Iron-sulfur</keyword>
<keyword id="KW-0479">Metal-binding</keyword>
<keyword id="KW-0521">NADP</keyword>
<keyword id="KW-0560">Oxidoreductase</keyword>
<keyword id="KW-1185">Reference proteome</keyword>
<feature type="chain" id="PRO_1000087628" description="Sulfite reductase [NADPH] hemoprotein beta-component">
    <location>
        <begin position="1"/>
        <end position="570"/>
    </location>
</feature>
<feature type="binding site" evidence="1">
    <location>
        <position position="434"/>
    </location>
    <ligand>
        <name>[4Fe-4S] cluster</name>
        <dbReference type="ChEBI" id="CHEBI:49883"/>
    </ligand>
</feature>
<feature type="binding site" evidence="1">
    <location>
        <position position="440"/>
    </location>
    <ligand>
        <name>[4Fe-4S] cluster</name>
        <dbReference type="ChEBI" id="CHEBI:49883"/>
    </ligand>
</feature>
<feature type="binding site" evidence="1">
    <location>
        <position position="479"/>
    </location>
    <ligand>
        <name>[4Fe-4S] cluster</name>
        <dbReference type="ChEBI" id="CHEBI:49883"/>
    </ligand>
</feature>
<feature type="binding site" evidence="1">
    <location>
        <position position="483"/>
    </location>
    <ligand>
        <name>[4Fe-4S] cluster</name>
        <dbReference type="ChEBI" id="CHEBI:49883"/>
    </ligand>
</feature>
<feature type="binding site" description="axial binding residue" evidence="1">
    <location>
        <position position="483"/>
    </location>
    <ligand>
        <name>siroheme</name>
        <dbReference type="ChEBI" id="CHEBI:60052"/>
    </ligand>
    <ligandPart>
        <name>Fe</name>
        <dbReference type="ChEBI" id="CHEBI:18248"/>
    </ligandPart>
</feature>
<proteinExistence type="inferred from homology"/>
<reference key="1">
    <citation type="submission" date="2007-11" db="EMBL/GenBank/DDBJ databases">
        <authorList>
            <consortium name="The Salmonella enterica serovar Arizonae Genome Sequencing Project"/>
            <person name="McClelland M."/>
            <person name="Sanderson E.K."/>
            <person name="Porwollik S."/>
            <person name="Spieth J."/>
            <person name="Clifton W.S."/>
            <person name="Fulton R."/>
            <person name="Chunyan W."/>
            <person name="Wollam A."/>
            <person name="Shah N."/>
            <person name="Pepin K."/>
            <person name="Bhonagiri V."/>
            <person name="Nash W."/>
            <person name="Johnson M."/>
            <person name="Thiruvilangam P."/>
            <person name="Wilson R."/>
        </authorList>
    </citation>
    <scope>NUCLEOTIDE SEQUENCE [LARGE SCALE GENOMIC DNA]</scope>
    <source>
        <strain>ATCC BAA-731 / CDC346-86 / RSK2980</strain>
    </source>
</reference>
<name>CYSI_SALAR</name>
<gene>
    <name evidence="1" type="primary">cysI</name>
    <name type="ordered locus">SARI_00015</name>
</gene>
<evidence type="ECO:0000255" key="1">
    <source>
        <dbReference type="HAMAP-Rule" id="MF_01540"/>
    </source>
</evidence>
<comment type="function">
    <text evidence="1">Component of the sulfite reductase complex that catalyzes the 6-electron reduction of sulfite to sulfide. This is one of several activities required for the biosynthesis of L-cysteine from sulfate.</text>
</comment>
<comment type="catalytic activity">
    <reaction evidence="1">
        <text>hydrogen sulfide + 3 NADP(+) + 3 H2O = sulfite + 3 NADPH + 4 H(+)</text>
        <dbReference type="Rhea" id="RHEA:13801"/>
        <dbReference type="ChEBI" id="CHEBI:15377"/>
        <dbReference type="ChEBI" id="CHEBI:15378"/>
        <dbReference type="ChEBI" id="CHEBI:17359"/>
        <dbReference type="ChEBI" id="CHEBI:29919"/>
        <dbReference type="ChEBI" id="CHEBI:57783"/>
        <dbReference type="ChEBI" id="CHEBI:58349"/>
        <dbReference type="EC" id="1.8.1.2"/>
    </reaction>
</comment>
<comment type="cofactor">
    <cofactor evidence="1">
        <name>siroheme</name>
        <dbReference type="ChEBI" id="CHEBI:60052"/>
    </cofactor>
    <text evidence="1">Binds 1 siroheme per subunit.</text>
</comment>
<comment type="cofactor">
    <cofactor evidence="1">
        <name>[4Fe-4S] cluster</name>
        <dbReference type="ChEBI" id="CHEBI:49883"/>
    </cofactor>
    <text evidence="1">Binds 1 [4Fe-4S] cluster per subunit.</text>
</comment>
<comment type="pathway">
    <text evidence="1">Sulfur metabolism; hydrogen sulfide biosynthesis; hydrogen sulfide from sulfite (NADPH route): step 1/1.</text>
</comment>
<comment type="subunit">
    <text evidence="1">Alpha(8)-beta(8). The alpha component is a flavoprotein, the beta component is a hemoprotein.</text>
</comment>
<comment type="similarity">
    <text evidence="1">Belongs to the nitrite and sulfite reductase 4Fe-4S domain family.</text>
</comment>